<name>TRM82_LODEL</name>
<comment type="function">
    <text evidence="1">Required for the formation of N(7)-methylguanine at position 46 (m7G46) in tRNA. In the complex, it is required to stabilize and induce conformational changes of the catalytic subunit.</text>
</comment>
<comment type="pathway">
    <text evidence="1">tRNA modification; N(7)-methylguanine-tRNA biosynthesis.</text>
</comment>
<comment type="subunit">
    <text evidence="1">Forms a heterodimer with the catalytic subunit TRM8.</text>
</comment>
<comment type="subcellular location">
    <subcellularLocation>
        <location evidence="1">Nucleus</location>
    </subcellularLocation>
</comment>
<comment type="similarity">
    <text evidence="1">Belongs to the WD repeat TRM82 family.</text>
</comment>
<evidence type="ECO:0000255" key="1">
    <source>
        <dbReference type="HAMAP-Rule" id="MF_03056"/>
    </source>
</evidence>
<dbReference type="EMBL" id="CH981531">
    <property type="protein sequence ID" value="EDK46912.1"/>
    <property type="molecule type" value="Genomic_DNA"/>
</dbReference>
<dbReference type="RefSeq" id="XP_001523677.1">
    <property type="nucleotide sequence ID" value="XM_001523627.1"/>
</dbReference>
<dbReference type="SMR" id="A5E654"/>
<dbReference type="FunCoup" id="A5E654">
    <property type="interactions" value="271"/>
</dbReference>
<dbReference type="STRING" id="379508.A5E654"/>
<dbReference type="GeneID" id="5230847"/>
<dbReference type="KEGG" id="lel:PVL30_005231"/>
<dbReference type="VEuPathDB" id="FungiDB:LELG_05093"/>
<dbReference type="eggNOG" id="KOG3914">
    <property type="taxonomic scope" value="Eukaryota"/>
</dbReference>
<dbReference type="HOGENOM" id="CLU_022082_0_0_1"/>
<dbReference type="InParanoid" id="A5E654"/>
<dbReference type="OrthoDB" id="339900at2759"/>
<dbReference type="UniPathway" id="UPA00989"/>
<dbReference type="Proteomes" id="UP000001996">
    <property type="component" value="Unassembled WGS sequence"/>
</dbReference>
<dbReference type="GO" id="GO:0005829">
    <property type="term" value="C:cytosol"/>
    <property type="evidence" value="ECO:0007669"/>
    <property type="project" value="TreeGrafter"/>
</dbReference>
<dbReference type="GO" id="GO:0005634">
    <property type="term" value="C:nucleus"/>
    <property type="evidence" value="ECO:0007669"/>
    <property type="project" value="UniProtKB-SubCell"/>
</dbReference>
<dbReference type="GO" id="GO:0043527">
    <property type="term" value="C:tRNA methyltransferase complex"/>
    <property type="evidence" value="ECO:0007669"/>
    <property type="project" value="TreeGrafter"/>
</dbReference>
<dbReference type="GO" id="GO:0106004">
    <property type="term" value="P:tRNA (guanine-N7)-methylation"/>
    <property type="evidence" value="ECO:0007669"/>
    <property type="project" value="UniProtKB-UniRule"/>
</dbReference>
<dbReference type="Gene3D" id="2.130.10.10">
    <property type="entry name" value="YVTN repeat-like/Quinoprotein amine dehydrogenase"/>
    <property type="match status" value="1"/>
</dbReference>
<dbReference type="HAMAP" id="MF_03056">
    <property type="entry name" value="TRM82"/>
    <property type="match status" value="1"/>
</dbReference>
<dbReference type="InterPro" id="IPR028884">
    <property type="entry name" value="Trm82"/>
</dbReference>
<dbReference type="InterPro" id="IPR015943">
    <property type="entry name" value="WD40/YVTN_repeat-like_dom_sf"/>
</dbReference>
<dbReference type="InterPro" id="IPR036322">
    <property type="entry name" value="WD40_repeat_dom_sf"/>
</dbReference>
<dbReference type="InterPro" id="IPR001680">
    <property type="entry name" value="WD40_rpt"/>
</dbReference>
<dbReference type="PANTHER" id="PTHR16288:SF0">
    <property type="entry name" value="TRNA (GUANINE-N(7)-)-METHYLTRANSFERASE NON-CATALYTIC SUBUNIT WDR4"/>
    <property type="match status" value="1"/>
</dbReference>
<dbReference type="PANTHER" id="PTHR16288">
    <property type="entry name" value="WD40 REPEAT PROTEIN 4"/>
    <property type="match status" value="1"/>
</dbReference>
<dbReference type="SMART" id="SM00320">
    <property type="entry name" value="WD40"/>
    <property type="match status" value="3"/>
</dbReference>
<dbReference type="SUPFAM" id="SSF50978">
    <property type="entry name" value="WD40 repeat-like"/>
    <property type="match status" value="1"/>
</dbReference>
<sequence>MKHPFQILTSSTDGKLLIASASSPSKESSLLLLLPELGDVLCQQNVPQPIYINYLETGPDKVLITADVDKNITIYKLENNELHQLKQQQMPKRLSGISTLNNDAIVCDSLGDVYQITIDTQPAVKKEDLKPLLGHTSPLTAVVAAQYKNPPKSFLITSDRDEHIRVSNYPKSYVIKGFLYGHTQFVSQIHLFEICKESRLVSGGGEGKLFFWDWFREVLITEFDLMPYVEEYLHEFHIKKSSKTKEEQDVQKEQEVENIQPKYEIGVQKIDSIEGEDGVFIVTLVENTSCLVVVHFTDEAKHAQTIQLAAPAVTFAIVGNKLFVSLDAENDNILTIYKFVDGQFVNDDEAQSSIAERIILANPINVEDKSKFAPFYSINQLRKRGNNYS</sequence>
<accession>A5E654</accession>
<organism>
    <name type="scientific">Lodderomyces elongisporus (strain ATCC 11503 / CBS 2605 / JCM 1781 / NBRC 1676 / NRRL YB-4239)</name>
    <name type="common">Yeast</name>
    <name type="synonym">Saccharomyces elongisporus</name>
    <dbReference type="NCBI Taxonomy" id="379508"/>
    <lineage>
        <taxon>Eukaryota</taxon>
        <taxon>Fungi</taxon>
        <taxon>Dikarya</taxon>
        <taxon>Ascomycota</taxon>
        <taxon>Saccharomycotina</taxon>
        <taxon>Pichiomycetes</taxon>
        <taxon>Debaryomycetaceae</taxon>
        <taxon>Candida/Lodderomyces clade</taxon>
        <taxon>Lodderomyces</taxon>
    </lineage>
</organism>
<proteinExistence type="inferred from homology"/>
<feature type="chain" id="PRO_0000370522" description="tRNA (guanine-N(7)-)-methyltransferase non-catalytic subunit TRM82">
    <location>
        <begin position="1"/>
        <end position="389"/>
    </location>
</feature>
<feature type="repeat" description="WD 1">
    <location>
        <begin position="44"/>
        <end position="86"/>
    </location>
</feature>
<feature type="repeat" description="WD 2">
    <location>
        <begin position="134"/>
        <end position="179"/>
    </location>
</feature>
<feature type="repeat" description="WD 3">
    <location>
        <begin position="184"/>
        <end position="222"/>
    </location>
</feature>
<keyword id="KW-0539">Nucleus</keyword>
<keyword id="KW-1185">Reference proteome</keyword>
<keyword id="KW-0677">Repeat</keyword>
<keyword id="KW-0819">tRNA processing</keyword>
<keyword id="KW-0853">WD repeat</keyword>
<gene>
    <name evidence="1" type="primary">TRM82</name>
    <name type="ORF">LELG_05093</name>
</gene>
<protein>
    <recommendedName>
        <fullName evidence="1">tRNA (guanine-N(7)-)-methyltransferase non-catalytic subunit TRM82</fullName>
    </recommendedName>
    <alternativeName>
        <fullName evidence="1">Transfer RNA methyltransferase 82</fullName>
    </alternativeName>
</protein>
<reference key="1">
    <citation type="journal article" date="2009" name="Nature">
        <title>Evolution of pathogenicity and sexual reproduction in eight Candida genomes.</title>
        <authorList>
            <person name="Butler G."/>
            <person name="Rasmussen M.D."/>
            <person name="Lin M.F."/>
            <person name="Santos M.A.S."/>
            <person name="Sakthikumar S."/>
            <person name="Munro C.A."/>
            <person name="Rheinbay E."/>
            <person name="Grabherr M."/>
            <person name="Forche A."/>
            <person name="Reedy J.L."/>
            <person name="Agrafioti I."/>
            <person name="Arnaud M.B."/>
            <person name="Bates S."/>
            <person name="Brown A.J.P."/>
            <person name="Brunke S."/>
            <person name="Costanzo M.C."/>
            <person name="Fitzpatrick D.A."/>
            <person name="de Groot P.W.J."/>
            <person name="Harris D."/>
            <person name="Hoyer L.L."/>
            <person name="Hube B."/>
            <person name="Klis F.M."/>
            <person name="Kodira C."/>
            <person name="Lennard N."/>
            <person name="Logue M.E."/>
            <person name="Martin R."/>
            <person name="Neiman A.M."/>
            <person name="Nikolaou E."/>
            <person name="Quail M.A."/>
            <person name="Quinn J."/>
            <person name="Santos M.C."/>
            <person name="Schmitzberger F.F."/>
            <person name="Sherlock G."/>
            <person name="Shah P."/>
            <person name="Silverstein K.A.T."/>
            <person name="Skrzypek M.S."/>
            <person name="Soll D."/>
            <person name="Staggs R."/>
            <person name="Stansfield I."/>
            <person name="Stumpf M.P.H."/>
            <person name="Sudbery P.E."/>
            <person name="Srikantha T."/>
            <person name="Zeng Q."/>
            <person name="Berman J."/>
            <person name="Berriman M."/>
            <person name="Heitman J."/>
            <person name="Gow N.A.R."/>
            <person name="Lorenz M.C."/>
            <person name="Birren B.W."/>
            <person name="Kellis M."/>
            <person name="Cuomo C.A."/>
        </authorList>
    </citation>
    <scope>NUCLEOTIDE SEQUENCE [LARGE SCALE GENOMIC DNA]</scope>
    <source>
        <strain>ATCC 11503 / BCRC 21390 / CBS 2605 / JCM 1781 / NBRC 1676 / NRRL YB-4239</strain>
    </source>
</reference>